<sequence length="276" mass="29628">MLTAHHLDVARRHDTILRDLSLSIEPGRVTALLGRNGAGKSTLLKTFAGELTGSVAPHGVRVTGDVTLNGEPLARIDAPRLACLRAVLPQAAQPAFPFSVDEIVLLGRYPHARRSGARHVIAHRDRDIAWRALERAGADALVGRDVTTLSGGELARVQFARVLAQLWPDHDATESGPRYLLLDEPTAALDLAHQHRLLDTVRAVAREWQLGVLAIVHDPNLAARHADTIAMLADGTIVAHGAPRDVMTPAHIAQCYGFAVKMVETGDGTPPVMVPA</sequence>
<feature type="chain" id="PRO_0000269581" description="Hemin import ATP-binding protein HmuV">
    <location>
        <begin position="1"/>
        <end position="276"/>
    </location>
</feature>
<feature type="domain" description="ABC transporter" evidence="1">
    <location>
        <begin position="2"/>
        <end position="259"/>
    </location>
</feature>
<feature type="binding site" evidence="1">
    <location>
        <begin position="34"/>
        <end position="41"/>
    </location>
    <ligand>
        <name>ATP</name>
        <dbReference type="ChEBI" id="CHEBI:30616"/>
    </ligand>
</feature>
<protein>
    <recommendedName>
        <fullName evidence="1">Hemin import ATP-binding protein HmuV</fullName>
        <ecNumber evidence="1">7.6.2.-</ecNumber>
    </recommendedName>
</protein>
<comment type="function">
    <text evidence="1">Part of the ABC transporter complex HmuTUV involved in hemin import. Responsible for energy coupling to the transport system.</text>
</comment>
<comment type="subunit">
    <text evidence="1">The complex is composed of two ATP-binding proteins (HmuV), two transmembrane proteins (HmuU) and a solute-binding protein (HmuT).</text>
</comment>
<comment type="subcellular location">
    <subcellularLocation>
        <location evidence="1">Cell inner membrane</location>
        <topology evidence="1">Peripheral membrane protein</topology>
    </subcellularLocation>
</comment>
<comment type="similarity">
    <text evidence="1">Belongs to the ABC transporter superfamily. Heme (hemin) importer (TC 3.A.1.14.5) family.</text>
</comment>
<keyword id="KW-0067">ATP-binding</keyword>
<keyword id="KW-0997">Cell inner membrane</keyword>
<keyword id="KW-1003">Cell membrane</keyword>
<keyword id="KW-0472">Membrane</keyword>
<keyword id="KW-0547">Nucleotide-binding</keyword>
<keyword id="KW-1278">Translocase</keyword>
<keyword id="KW-0813">Transport</keyword>
<proteinExistence type="inferred from homology"/>
<evidence type="ECO:0000255" key="1">
    <source>
        <dbReference type="HAMAP-Rule" id="MF_01718"/>
    </source>
</evidence>
<gene>
    <name evidence="1" type="primary">hmuV</name>
    <name type="ordered locus">Bcen_5427</name>
</gene>
<dbReference type="EC" id="7.6.2.-" evidence="1"/>
<dbReference type="EMBL" id="CP000379">
    <property type="protein sequence ID" value="ABF80300.1"/>
    <property type="molecule type" value="Genomic_DNA"/>
</dbReference>
<dbReference type="SMR" id="Q1BJA5"/>
<dbReference type="HOGENOM" id="CLU_000604_1_11_4"/>
<dbReference type="GO" id="GO:0005886">
    <property type="term" value="C:plasma membrane"/>
    <property type="evidence" value="ECO:0007669"/>
    <property type="project" value="UniProtKB-SubCell"/>
</dbReference>
<dbReference type="GO" id="GO:0005524">
    <property type="term" value="F:ATP binding"/>
    <property type="evidence" value="ECO:0007669"/>
    <property type="project" value="UniProtKB-KW"/>
</dbReference>
<dbReference type="GO" id="GO:0016887">
    <property type="term" value="F:ATP hydrolysis activity"/>
    <property type="evidence" value="ECO:0007669"/>
    <property type="project" value="InterPro"/>
</dbReference>
<dbReference type="CDD" id="cd03214">
    <property type="entry name" value="ABC_Iron-Siderophores_B12_Hemin"/>
    <property type="match status" value="1"/>
</dbReference>
<dbReference type="Gene3D" id="3.40.50.300">
    <property type="entry name" value="P-loop containing nucleotide triphosphate hydrolases"/>
    <property type="match status" value="1"/>
</dbReference>
<dbReference type="InterPro" id="IPR003593">
    <property type="entry name" value="AAA+_ATPase"/>
</dbReference>
<dbReference type="InterPro" id="IPR003439">
    <property type="entry name" value="ABC_transporter-like_ATP-bd"/>
</dbReference>
<dbReference type="InterPro" id="IPR017871">
    <property type="entry name" value="ABC_transporter-like_CS"/>
</dbReference>
<dbReference type="InterPro" id="IPR027417">
    <property type="entry name" value="P-loop_NTPase"/>
</dbReference>
<dbReference type="NCBIfam" id="NF010067">
    <property type="entry name" value="PRK13547.1"/>
    <property type="match status" value="1"/>
</dbReference>
<dbReference type="NCBIfam" id="NF010068">
    <property type="entry name" value="PRK13548.1"/>
    <property type="match status" value="1"/>
</dbReference>
<dbReference type="PANTHER" id="PTHR42794">
    <property type="entry name" value="HEMIN IMPORT ATP-BINDING PROTEIN HMUV"/>
    <property type="match status" value="1"/>
</dbReference>
<dbReference type="PANTHER" id="PTHR42794:SF1">
    <property type="entry name" value="HEMIN IMPORT ATP-BINDING PROTEIN HMUV"/>
    <property type="match status" value="1"/>
</dbReference>
<dbReference type="Pfam" id="PF00005">
    <property type="entry name" value="ABC_tran"/>
    <property type="match status" value="1"/>
</dbReference>
<dbReference type="SMART" id="SM00382">
    <property type="entry name" value="AAA"/>
    <property type="match status" value="1"/>
</dbReference>
<dbReference type="SUPFAM" id="SSF52540">
    <property type="entry name" value="P-loop containing nucleoside triphosphate hydrolases"/>
    <property type="match status" value="1"/>
</dbReference>
<dbReference type="PROSITE" id="PS00211">
    <property type="entry name" value="ABC_TRANSPORTER_1"/>
    <property type="match status" value="1"/>
</dbReference>
<dbReference type="PROSITE" id="PS50893">
    <property type="entry name" value="ABC_TRANSPORTER_2"/>
    <property type="match status" value="1"/>
</dbReference>
<dbReference type="PROSITE" id="PS51261">
    <property type="entry name" value="HMUV"/>
    <property type="match status" value="1"/>
</dbReference>
<accession>Q1BJA5</accession>
<reference key="1">
    <citation type="submission" date="2006-05" db="EMBL/GenBank/DDBJ databases">
        <title>Complete sequence of chromosome 2 of Burkholderia cenocepacia AU 1054.</title>
        <authorList>
            <consortium name="US DOE Joint Genome Institute"/>
            <person name="Copeland A."/>
            <person name="Lucas S."/>
            <person name="Lapidus A."/>
            <person name="Barry K."/>
            <person name="Detter J.C."/>
            <person name="Glavina del Rio T."/>
            <person name="Hammon N."/>
            <person name="Israni S."/>
            <person name="Dalin E."/>
            <person name="Tice H."/>
            <person name="Pitluck S."/>
            <person name="Chain P."/>
            <person name="Malfatti S."/>
            <person name="Shin M."/>
            <person name="Vergez L."/>
            <person name="Schmutz J."/>
            <person name="Larimer F."/>
            <person name="Land M."/>
            <person name="Hauser L."/>
            <person name="Kyrpides N."/>
            <person name="Lykidis A."/>
            <person name="LiPuma J.J."/>
            <person name="Konstantinidis K."/>
            <person name="Tiedje J.M."/>
            <person name="Richardson P."/>
        </authorList>
    </citation>
    <scope>NUCLEOTIDE SEQUENCE [LARGE SCALE GENOMIC DNA]</scope>
    <source>
        <strain>AU 1054</strain>
    </source>
</reference>
<organism>
    <name type="scientific">Burkholderia orbicola (strain AU 1054)</name>
    <dbReference type="NCBI Taxonomy" id="331271"/>
    <lineage>
        <taxon>Bacteria</taxon>
        <taxon>Pseudomonadati</taxon>
        <taxon>Pseudomonadota</taxon>
        <taxon>Betaproteobacteria</taxon>
        <taxon>Burkholderiales</taxon>
        <taxon>Burkholderiaceae</taxon>
        <taxon>Burkholderia</taxon>
        <taxon>Burkholderia cepacia complex</taxon>
        <taxon>Burkholderia orbicola</taxon>
    </lineage>
</organism>
<name>HMUV_BURO1</name>